<sequence>MLNKIYDWVDERLDITPMWRDIADHEVPEHVNPAHHFSAFVYCFGGLTFFVTVIQVLSGMFLTMYYVPDIKNAWESVYYLQNEVAFGQIVRGMHHWGASLVIVMMFLHTLRVFFQGAYKKPRELNWIVGVLIFFVMLGLGFTGYLLPWDMKALFATKVGLQIAEATPLIGTQVKTLLAGHPDIVGAQTLTRFFAIHVFFLPAALFGLMAAHFIMIRKQGISGPL</sequence>
<comment type="function">
    <text evidence="7 8">Component of the menaquinol:cytochrome c reductase complex.</text>
</comment>
<comment type="cofactor">
    <cofactor evidence="1">
        <name>heme b</name>
        <dbReference type="ChEBI" id="CHEBI:60344"/>
    </cofactor>
    <text evidence="1">Binds 2 heme b groups non-covalently with two histidine residues as axial ligands.</text>
</comment>
<comment type="cofactor">
    <cofactor evidence="1">
        <name>heme c</name>
        <dbReference type="ChEBI" id="CHEBI:61717"/>
    </cofactor>
    <text evidence="1">Binds one heme group covalently by a single cysteine link with no axial amino acid ligand.</text>
</comment>
<comment type="subunit">
    <text evidence="3">The main subunits of the menaquinol:cytochrome c complex are a Rieske-type iron-sulfur protein (QcrA), a cytochrome b (QcrB) and a cytochrome c (QcrC).</text>
</comment>
<comment type="subcellular location">
    <subcellularLocation>
        <location evidence="6">Cell membrane</location>
        <topology evidence="6">Multi-pass membrane protein</topology>
    </subcellularLocation>
</comment>
<comment type="miscellaneous">
    <text evidence="6">This cytochrome b is similar to other bacterial and plant chloroplast cytochrome b6 proteins in binding one of three hemes with a single thioether bond.</text>
</comment>
<comment type="similarity">
    <text evidence="2">Belongs to the cytochrome b family.</text>
</comment>
<name>QCRB_BACSU</name>
<accession>P46912</accession>
<dbReference type="EMBL" id="U25535">
    <property type="protein sequence ID" value="AAA85561.1"/>
    <property type="molecule type" value="Genomic_DNA"/>
</dbReference>
<dbReference type="EMBL" id="L47709">
    <property type="protein sequence ID" value="AAB38436.1"/>
    <property type="molecule type" value="Genomic_DNA"/>
</dbReference>
<dbReference type="EMBL" id="AL009126">
    <property type="protein sequence ID" value="CAB14171.1"/>
    <property type="molecule type" value="Genomic_DNA"/>
</dbReference>
<dbReference type="PIR" id="C69687">
    <property type="entry name" value="C69687"/>
</dbReference>
<dbReference type="RefSeq" id="NP_390136.1">
    <property type="nucleotide sequence ID" value="NC_000964.3"/>
</dbReference>
<dbReference type="RefSeq" id="WP_003225560.1">
    <property type="nucleotide sequence ID" value="NZ_OZ025638.1"/>
</dbReference>
<dbReference type="SMR" id="P46912"/>
<dbReference type="FunCoup" id="P46912">
    <property type="interactions" value="264"/>
</dbReference>
<dbReference type="STRING" id="224308.BSU22550"/>
<dbReference type="TCDB" id="3.D.3.4.1">
    <property type="family name" value="the proton-translocating quinol:cytochrome c reductase (qcr) superfamily"/>
</dbReference>
<dbReference type="PaxDb" id="224308-BSU22550"/>
<dbReference type="EnsemblBacteria" id="CAB14171">
    <property type="protein sequence ID" value="CAB14171"/>
    <property type="gene ID" value="BSU_22550"/>
</dbReference>
<dbReference type="GeneID" id="92917471"/>
<dbReference type="GeneID" id="939019"/>
<dbReference type="KEGG" id="bsu:BSU22550"/>
<dbReference type="PATRIC" id="fig|224308.179.peg.2459"/>
<dbReference type="eggNOG" id="COG1290">
    <property type="taxonomic scope" value="Bacteria"/>
</dbReference>
<dbReference type="InParanoid" id="P46912"/>
<dbReference type="OrthoDB" id="9804503at2"/>
<dbReference type="PhylomeDB" id="P46912"/>
<dbReference type="BioCyc" id="BSUB:BSU22550-MONOMER"/>
<dbReference type="BioCyc" id="MetaCyc:BSU22550-MONOMER"/>
<dbReference type="PRO" id="PR:P46912"/>
<dbReference type="Proteomes" id="UP000001570">
    <property type="component" value="Chromosome"/>
</dbReference>
<dbReference type="GO" id="GO:0016020">
    <property type="term" value="C:membrane"/>
    <property type="evidence" value="ECO:0000318"/>
    <property type="project" value="GO_Central"/>
</dbReference>
<dbReference type="GO" id="GO:0005886">
    <property type="term" value="C:plasma membrane"/>
    <property type="evidence" value="ECO:0007669"/>
    <property type="project" value="UniProtKB-SubCell"/>
</dbReference>
<dbReference type="GO" id="GO:0009055">
    <property type="term" value="F:electron transfer activity"/>
    <property type="evidence" value="ECO:0007669"/>
    <property type="project" value="InterPro"/>
</dbReference>
<dbReference type="GO" id="GO:0046872">
    <property type="term" value="F:metal ion binding"/>
    <property type="evidence" value="ECO:0007669"/>
    <property type="project" value="UniProtKB-KW"/>
</dbReference>
<dbReference type="GO" id="GO:0016491">
    <property type="term" value="F:oxidoreductase activity"/>
    <property type="evidence" value="ECO:0007669"/>
    <property type="project" value="InterPro"/>
</dbReference>
<dbReference type="GO" id="GO:0022904">
    <property type="term" value="P:respiratory electron transport chain"/>
    <property type="evidence" value="ECO:0007669"/>
    <property type="project" value="InterPro"/>
</dbReference>
<dbReference type="FunFam" id="1.20.810.10:FF:000003">
    <property type="entry name" value="Menaquinol-Cytochrome c reductase cytochrome b6 subunit"/>
    <property type="match status" value="1"/>
</dbReference>
<dbReference type="Gene3D" id="1.20.810.10">
    <property type="entry name" value="Cytochrome Bc1 Complex, Chain C"/>
    <property type="match status" value="1"/>
</dbReference>
<dbReference type="InterPro" id="IPR005797">
    <property type="entry name" value="Cyt_b/b6_N"/>
</dbReference>
<dbReference type="InterPro" id="IPR027387">
    <property type="entry name" value="Cytb/b6-like_sf"/>
</dbReference>
<dbReference type="InterPro" id="IPR016174">
    <property type="entry name" value="Di-haem_cyt_TM"/>
</dbReference>
<dbReference type="NCBIfam" id="NF040969">
    <property type="entry name" value="cytb_ExtP"/>
    <property type="match status" value="1"/>
</dbReference>
<dbReference type="NCBIfam" id="NF002990">
    <property type="entry name" value="PRK03735.1"/>
    <property type="match status" value="1"/>
</dbReference>
<dbReference type="PANTHER" id="PTHR19271">
    <property type="entry name" value="CYTOCHROME B"/>
    <property type="match status" value="1"/>
</dbReference>
<dbReference type="PANTHER" id="PTHR19271:SF16">
    <property type="entry name" value="CYTOCHROME B"/>
    <property type="match status" value="1"/>
</dbReference>
<dbReference type="Pfam" id="PF00033">
    <property type="entry name" value="Cytochrome_B"/>
    <property type="match status" value="1"/>
</dbReference>
<dbReference type="PIRSF" id="PIRSF000032">
    <property type="entry name" value="Cytochrome_b6"/>
    <property type="match status" value="1"/>
</dbReference>
<dbReference type="SUPFAM" id="SSF81342">
    <property type="entry name" value="Transmembrane di-heme cytochromes"/>
    <property type="match status" value="1"/>
</dbReference>
<dbReference type="PROSITE" id="PS51002">
    <property type="entry name" value="CYTB_NTER"/>
    <property type="match status" value="1"/>
</dbReference>
<proteinExistence type="evidence at protein level"/>
<evidence type="ECO:0000250" key="1">
    <source>
        <dbReference type="UniProtKB" id="Q57038"/>
    </source>
</evidence>
<evidence type="ECO:0000255" key="2">
    <source>
        <dbReference type="PROSITE-ProRule" id="PRU00968"/>
    </source>
</evidence>
<evidence type="ECO:0000269" key="3">
    <source>
    </source>
</evidence>
<evidence type="ECO:0000303" key="4">
    <source>
    </source>
</evidence>
<evidence type="ECO:0000303" key="5">
    <source>
    </source>
</evidence>
<evidence type="ECO:0000305" key="6"/>
<evidence type="ECO:0000305" key="7">
    <source>
    </source>
</evidence>
<evidence type="ECO:0000305" key="8">
    <source>
    </source>
</evidence>
<keyword id="KW-1003">Cell membrane</keyword>
<keyword id="KW-0249">Electron transport</keyword>
<keyword id="KW-0349">Heme</keyword>
<keyword id="KW-0408">Iron</keyword>
<keyword id="KW-0472">Membrane</keyword>
<keyword id="KW-0479">Metal-binding</keyword>
<keyword id="KW-1185">Reference proteome</keyword>
<keyword id="KW-0812">Transmembrane</keyword>
<keyword id="KW-1133">Transmembrane helix</keyword>
<keyword id="KW-0813">Transport</keyword>
<gene>
    <name evidence="4 5" type="primary">qcrB</name>
    <name type="synonym">bfcB</name>
    <name type="ordered locus">BSU22550</name>
</gene>
<organism>
    <name type="scientific">Bacillus subtilis (strain 168)</name>
    <dbReference type="NCBI Taxonomy" id="224308"/>
    <lineage>
        <taxon>Bacteria</taxon>
        <taxon>Bacillati</taxon>
        <taxon>Bacillota</taxon>
        <taxon>Bacilli</taxon>
        <taxon>Bacillales</taxon>
        <taxon>Bacillaceae</taxon>
        <taxon>Bacillus</taxon>
    </lineage>
</organism>
<reference key="1">
    <citation type="journal article" date="1995" name="J. Bacteriol.">
        <title>The cytochrome bc complex (menaquinone:cytochrome c reductase) in Bacillus subtilis has a nontraditional subunit organization.</title>
        <authorList>
            <person name="Yu J."/>
            <person name="Hederstedt L."/>
            <person name="Piggot P.J."/>
        </authorList>
    </citation>
    <scope>NUCLEOTIDE SEQUENCE [GENOMIC DNA]</scope>
    <scope>FUNCTION</scope>
    <source>
        <strain>168 / BR151</strain>
    </source>
</reference>
<reference key="2">
    <citation type="journal article" date="1996" name="Microbiology">
        <title>Sequence analysis of the Bacillus subtilis chromosome region between the serA and kdg loci cloned in a yeast artificial chromosome.</title>
        <authorList>
            <person name="Sorokin A.V."/>
            <person name="Azevedo V."/>
            <person name="Zumstein E."/>
            <person name="Galleron N."/>
            <person name="Ehrlich S.D."/>
            <person name="Serror P."/>
        </authorList>
    </citation>
    <scope>NUCLEOTIDE SEQUENCE [GENOMIC DNA]</scope>
    <source>
        <strain>168 / Marburg / ATCC 6051 / DSM 10 / JCM 1465 / NBRC 13719 / NCIMB 3610 / NRRL NRS-744 / VKM B-501</strain>
    </source>
</reference>
<reference key="3">
    <citation type="journal article" date="1997" name="Nature">
        <title>The complete genome sequence of the Gram-positive bacterium Bacillus subtilis.</title>
        <authorList>
            <person name="Kunst F."/>
            <person name="Ogasawara N."/>
            <person name="Moszer I."/>
            <person name="Albertini A.M."/>
            <person name="Alloni G."/>
            <person name="Azevedo V."/>
            <person name="Bertero M.G."/>
            <person name="Bessieres P."/>
            <person name="Bolotin A."/>
            <person name="Borchert S."/>
            <person name="Borriss R."/>
            <person name="Boursier L."/>
            <person name="Brans A."/>
            <person name="Braun M."/>
            <person name="Brignell S.C."/>
            <person name="Bron S."/>
            <person name="Brouillet S."/>
            <person name="Bruschi C.V."/>
            <person name="Caldwell B."/>
            <person name="Capuano V."/>
            <person name="Carter N.M."/>
            <person name="Choi S.-K."/>
            <person name="Codani J.-J."/>
            <person name="Connerton I.F."/>
            <person name="Cummings N.J."/>
            <person name="Daniel R.A."/>
            <person name="Denizot F."/>
            <person name="Devine K.M."/>
            <person name="Duesterhoeft A."/>
            <person name="Ehrlich S.D."/>
            <person name="Emmerson P.T."/>
            <person name="Entian K.-D."/>
            <person name="Errington J."/>
            <person name="Fabret C."/>
            <person name="Ferrari E."/>
            <person name="Foulger D."/>
            <person name="Fritz C."/>
            <person name="Fujita M."/>
            <person name="Fujita Y."/>
            <person name="Fuma S."/>
            <person name="Galizzi A."/>
            <person name="Galleron N."/>
            <person name="Ghim S.-Y."/>
            <person name="Glaser P."/>
            <person name="Goffeau A."/>
            <person name="Golightly E.J."/>
            <person name="Grandi G."/>
            <person name="Guiseppi G."/>
            <person name="Guy B.J."/>
            <person name="Haga K."/>
            <person name="Haiech J."/>
            <person name="Harwood C.R."/>
            <person name="Henaut A."/>
            <person name="Hilbert H."/>
            <person name="Holsappel S."/>
            <person name="Hosono S."/>
            <person name="Hullo M.-F."/>
            <person name="Itaya M."/>
            <person name="Jones L.-M."/>
            <person name="Joris B."/>
            <person name="Karamata D."/>
            <person name="Kasahara Y."/>
            <person name="Klaerr-Blanchard M."/>
            <person name="Klein C."/>
            <person name="Kobayashi Y."/>
            <person name="Koetter P."/>
            <person name="Koningstein G."/>
            <person name="Krogh S."/>
            <person name="Kumano M."/>
            <person name="Kurita K."/>
            <person name="Lapidus A."/>
            <person name="Lardinois S."/>
            <person name="Lauber J."/>
            <person name="Lazarevic V."/>
            <person name="Lee S.-M."/>
            <person name="Levine A."/>
            <person name="Liu H."/>
            <person name="Masuda S."/>
            <person name="Mauel C."/>
            <person name="Medigue C."/>
            <person name="Medina N."/>
            <person name="Mellado R.P."/>
            <person name="Mizuno M."/>
            <person name="Moestl D."/>
            <person name="Nakai S."/>
            <person name="Noback M."/>
            <person name="Noone D."/>
            <person name="O'Reilly M."/>
            <person name="Ogawa K."/>
            <person name="Ogiwara A."/>
            <person name="Oudega B."/>
            <person name="Park S.-H."/>
            <person name="Parro V."/>
            <person name="Pohl T.M."/>
            <person name="Portetelle D."/>
            <person name="Porwollik S."/>
            <person name="Prescott A.M."/>
            <person name="Presecan E."/>
            <person name="Pujic P."/>
            <person name="Purnelle B."/>
            <person name="Rapoport G."/>
            <person name="Rey M."/>
            <person name="Reynolds S."/>
            <person name="Rieger M."/>
            <person name="Rivolta C."/>
            <person name="Rocha E."/>
            <person name="Roche B."/>
            <person name="Rose M."/>
            <person name="Sadaie Y."/>
            <person name="Sato T."/>
            <person name="Scanlan E."/>
            <person name="Schleich S."/>
            <person name="Schroeter R."/>
            <person name="Scoffone F."/>
            <person name="Sekiguchi J."/>
            <person name="Sekowska A."/>
            <person name="Seror S.J."/>
            <person name="Serror P."/>
            <person name="Shin B.-S."/>
            <person name="Soldo B."/>
            <person name="Sorokin A."/>
            <person name="Tacconi E."/>
            <person name="Takagi T."/>
            <person name="Takahashi H."/>
            <person name="Takemaru K."/>
            <person name="Takeuchi M."/>
            <person name="Tamakoshi A."/>
            <person name="Tanaka T."/>
            <person name="Terpstra P."/>
            <person name="Tognoni A."/>
            <person name="Tosato V."/>
            <person name="Uchiyama S."/>
            <person name="Vandenbol M."/>
            <person name="Vannier F."/>
            <person name="Vassarotti A."/>
            <person name="Viari A."/>
            <person name="Wambutt R."/>
            <person name="Wedler E."/>
            <person name="Wedler H."/>
            <person name="Weitzenegger T."/>
            <person name="Winters P."/>
            <person name="Wipat A."/>
            <person name="Yamamoto H."/>
            <person name="Yamane K."/>
            <person name="Yasumoto K."/>
            <person name="Yata K."/>
            <person name="Yoshida K."/>
            <person name="Yoshikawa H.-F."/>
            <person name="Zumstein E."/>
            <person name="Yoshikawa H."/>
            <person name="Danchin A."/>
        </authorList>
    </citation>
    <scope>NUCLEOTIDE SEQUENCE [LARGE SCALE GENOMIC DNA]</scope>
    <source>
        <strain>168</strain>
    </source>
</reference>
<reference key="4">
    <citation type="journal article" date="1998" name="J. Biol. Chem.">
        <title>Studies of the cytochrome subunits of menaquinone:cytochrome c reductase (bc complex) of Bacillus subtilis. Evidence for the covalent attachment of heme to the cytochrome b subunit.</title>
        <authorList>
            <person name="Yu J."/>
            <person name="Le Brun N.E."/>
        </authorList>
    </citation>
    <scope>HEME-BINDING</scope>
    <scope>FUNCTION</scope>
    <scope>SUBUNIT</scope>
</reference>
<feature type="chain" id="PRO_0000061918" description="Menaquinol:cytochrome c reductase cytochrome b subunit">
    <location>
        <begin position="1"/>
        <end position="224"/>
    </location>
</feature>
<feature type="transmembrane region" description="Helical" evidence="2">
    <location>
        <begin position="37"/>
        <end position="57"/>
    </location>
</feature>
<feature type="transmembrane region" description="Helical" evidence="2">
    <location>
        <begin position="96"/>
        <end position="116"/>
    </location>
</feature>
<feature type="transmembrane region" description="Helical" evidence="2">
    <location>
        <begin position="126"/>
        <end position="146"/>
    </location>
</feature>
<feature type="transmembrane region" description="Helical" evidence="2">
    <location>
        <begin position="195"/>
        <end position="215"/>
    </location>
</feature>
<feature type="binding site" evidence="1">
    <location>
        <position position="42"/>
    </location>
    <ligand>
        <name>heme b</name>
        <dbReference type="ChEBI" id="CHEBI:60344"/>
        <label>1</label>
    </ligand>
</feature>
<feature type="binding site" description="covalent" evidence="1">
    <location>
        <position position="43"/>
    </location>
    <ligand>
        <name>heme c</name>
        <dbReference type="ChEBI" id="CHEBI:61717"/>
    </ligand>
</feature>
<feature type="binding site" evidence="1">
    <location>
        <position position="91"/>
    </location>
    <ligand>
        <name>heme b</name>
        <dbReference type="ChEBI" id="CHEBI:60344"/>
        <label>2</label>
    </ligand>
</feature>
<feature type="binding site" description="axial binding residue" evidence="1">
    <location>
        <position position="94"/>
    </location>
    <ligand>
        <name>heme b</name>
        <dbReference type="ChEBI" id="CHEBI:60344"/>
        <label>2</label>
    </ligand>
    <ligandPart>
        <name>Fe</name>
        <dbReference type="ChEBI" id="CHEBI:18248"/>
    </ligandPart>
</feature>
<feature type="binding site" description="axial binding residue" evidence="1">
    <location>
        <position position="108"/>
    </location>
    <ligand>
        <name>heme b</name>
        <dbReference type="ChEBI" id="CHEBI:60344"/>
        <label>1</label>
    </ligand>
    <ligandPart>
        <name>Fe</name>
        <dbReference type="ChEBI" id="CHEBI:18248"/>
    </ligandPart>
</feature>
<feature type="binding site" evidence="1">
    <location>
        <position position="111"/>
    </location>
    <ligand>
        <name>heme b</name>
        <dbReference type="ChEBI" id="CHEBI:60344"/>
        <label>1</label>
    </ligand>
</feature>
<feature type="binding site" description="axial binding residue" evidence="1">
    <location>
        <position position="196"/>
    </location>
    <ligand>
        <name>heme b</name>
        <dbReference type="ChEBI" id="CHEBI:60344"/>
        <label>2</label>
    </ligand>
    <ligandPart>
        <name>Fe</name>
        <dbReference type="ChEBI" id="CHEBI:18248"/>
    </ligandPart>
</feature>
<feature type="binding site" description="axial binding residue" evidence="1">
    <location>
        <position position="211"/>
    </location>
    <ligand>
        <name>heme b</name>
        <dbReference type="ChEBI" id="CHEBI:60344"/>
        <label>1</label>
    </ligand>
    <ligandPart>
        <name>Fe</name>
        <dbReference type="ChEBI" id="CHEBI:18248"/>
    </ligandPart>
</feature>
<feature type="binding site" evidence="1">
    <location>
        <position position="216"/>
    </location>
    <ligand>
        <name>heme c</name>
        <dbReference type="ChEBI" id="CHEBI:61717"/>
    </ligand>
</feature>
<feature type="binding site" evidence="1">
    <location>
        <position position="220"/>
    </location>
    <ligand>
        <name>heme c</name>
        <dbReference type="ChEBI" id="CHEBI:61717"/>
    </ligand>
</feature>
<feature type="binding site" evidence="1">
    <location>
        <position position="221"/>
    </location>
    <ligand>
        <name>heme b</name>
        <dbReference type="ChEBI" id="CHEBI:60344"/>
        <label>1</label>
    </ligand>
</feature>
<protein>
    <recommendedName>
        <fullName evidence="4 5">Menaquinol:cytochrome c reductase cytochrome b subunit</fullName>
    </recommendedName>
    <alternativeName>
        <fullName evidence="4 5">Cytochrome bc complex, cytochrome b subunit</fullName>
    </alternativeName>
</protein>